<reference key="1">
    <citation type="journal article" date="1994" name="J. Bacteriol.">
        <title>Alp suppression of Lon: dependence on the slpA gene.</title>
        <authorList>
            <person name="Trempy J.E."/>
            <person name="Kirby J.E."/>
            <person name="Gottesman S."/>
        </authorList>
    </citation>
    <scope>NUCLEOTIDE SEQUENCE [GENOMIC DNA]</scope>
    <scope>FUNCTION</scope>
    <source>
        <strain>K12</strain>
    </source>
</reference>
<reference key="2">
    <citation type="journal article" date="1997" name="Science">
        <title>The complete genome sequence of Escherichia coli K-12.</title>
        <authorList>
            <person name="Blattner F.R."/>
            <person name="Plunkett G. III"/>
            <person name="Bloch C.A."/>
            <person name="Perna N.T."/>
            <person name="Burland V."/>
            <person name="Riley M."/>
            <person name="Collado-Vides J."/>
            <person name="Glasner J.D."/>
            <person name="Rode C.K."/>
            <person name="Mayhew G.F."/>
            <person name="Gregor J."/>
            <person name="Davis N.W."/>
            <person name="Kirkpatrick H.A."/>
            <person name="Goeden M.A."/>
            <person name="Rose D.J."/>
            <person name="Mau B."/>
            <person name="Shao Y."/>
        </authorList>
    </citation>
    <scope>NUCLEOTIDE SEQUENCE [LARGE SCALE GENOMIC DNA]</scope>
    <source>
        <strain>K12 / MG1655 / ATCC 47076</strain>
    </source>
</reference>
<reference key="3">
    <citation type="journal article" date="2006" name="Mol. Syst. Biol.">
        <title>Highly accurate genome sequences of Escherichia coli K-12 strains MG1655 and W3110.</title>
        <authorList>
            <person name="Hayashi K."/>
            <person name="Morooka N."/>
            <person name="Yamamoto Y."/>
            <person name="Fujita K."/>
            <person name="Isono K."/>
            <person name="Choi S."/>
            <person name="Ohtsubo E."/>
            <person name="Baba T."/>
            <person name="Wanner B.L."/>
            <person name="Mori H."/>
            <person name="Horiuchi T."/>
        </authorList>
    </citation>
    <scope>NUCLEOTIDE SEQUENCE [LARGE SCALE GENOMIC DNA]</scope>
    <source>
        <strain>K12 / W3110 / ATCC 27325 / DSM 5911</strain>
    </source>
</reference>
<reference key="4">
    <citation type="journal article" date="1994" name="J. Bacteriol.">
        <title>Excision of a P4-like cryptic prophage leads to Alp protease expression in Escherichia coli.</title>
        <authorList>
            <person name="Kirby J.E."/>
            <person name="Trempy J.E."/>
            <person name="Gottesman S."/>
        </authorList>
    </citation>
    <scope>FUNCTION</scope>
    <source>
        <strain>K12</strain>
    </source>
</reference>
<sequence>MNNRSAVRILRLPAVIQKTGMARATIYDWLNPKSPRYDATFPKKRMLGVKSVGWIEAEIDEWLSQRCKLI</sequence>
<proteinExistence type="predicted"/>
<feature type="chain" id="PRO_0000064571" description="DNA-binding transcriptional activator AlpA">
    <location>
        <begin position="1"/>
        <end position="70"/>
    </location>
</feature>
<feature type="DNA-binding region" description="H-T-H motif" evidence="1">
    <location>
        <begin position="12"/>
        <end position="31"/>
    </location>
</feature>
<gene>
    <name evidence="4" type="primary">alpA</name>
    <name type="synonym">alp</name>
    <name type="ordered locus">b2624</name>
    <name type="ordered locus">JW2604</name>
</gene>
<accession>P33997</accession>
<accession>Q2MAE7</accession>
<evidence type="ECO:0000255" key="1"/>
<evidence type="ECO:0000269" key="2">
    <source>
    </source>
</evidence>
<evidence type="ECO:0000269" key="3">
    <source>
    </source>
</evidence>
<evidence type="ECO:0000303" key="4">
    <source>
    </source>
</evidence>
<evidence type="ECO:0000305" key="5"/>
<protein>
    <recommendedName>
        <fullName evidence="5">DNA-binding transcriptional activator AlpA</fullName>
    </recommendedName>
    <alternativeName>
        <fullName>Prophage CP4-57 regulatory protein AlpA</fullName>
    </alternativeName>
</protein>
<dbReference type="EMBL" id="U03737">
    <property type="protein sequence ID" value="AAA18418.1"/>
    <property type="molecule type" value="Unassigned_DNA"/>
</dbReference>
<dbReference type="EMBL" id="U36840">
    <property type="protein sequence ID" value="AAA79793.1"/>
    <property type="molecule type" value="Genomic_DNA"/>
</dbReference>
<dbReference type="EMBL" id="U00096">
    <property type="protein sequence ID" value="AAC75672.1"/>
    <property type="molecule type" value="Genomic_DNA"/>
</dbReference>
<dbReference type="EMBL" id="AP009048">
    <property type="protein sequence ID" value="BAE76759.1"/>
    <property type="molecule type" value="Genomic_DNA"/>
</dbReference>
<dbReference type="PIR" id="B65041">
    <property type="entry name" value="B65041"/>
</dbReference>
<dbReference type="RefSeq" id="NP_417113.1">
    <property type="nucleotide sequence ID" value="NC_000913.3"/>
</dbReference>
<dbReference type="RefSeq" id="WP_001065343.1">
    <property type="nucleotide sequence ID" value="NZ_LN832404.1"/>
</dbReference>
<dbReference type="SMR" id="P33997"/>
<dbReference type="BioGRID" id="4260621">
    <property type="interactions" value="124"/>
</dbReference>
<dbReference type="FunCoup" id="P33997">
    <property type="interactions" value="136"/>
</dbReference>
<dbReference type="IntAct" id="P33997">
    <property type="interactions" value="3"/>
</dbReference>
<dbReference type="STRING" id="511145.b2624"/>
<dbReference type="PaxDb" id="511145-b2624"/>
<dbReference type="EnsemblBacteria" id="AAC75672">
    <property type="protein sequence ID" value="AAC75672"/>
    <property type="gene ID" value="b2624"/>
</dbReference>
<dbReference type="GeneID" id="946758"/>
<dbReference type="KEGG" id="ecj:JW2604"/>
<dbReference type="KEGG" id="eco:b2624"/>
<dbReference type="KEGG" id="ecoc:C3026_14520"/>
<dbReference type="PATRIC" id="fig|1411691.4.peg.4115"/>
<dbReference type="EchoBASE" id="EB2035"/>
<dbReference type="eggNOG" id="COG3311">
    <property type="taxonomic scope" value="Bacteria"/>
</dbReference>
<dbReference type="HOGENOM" id="CLU_140176_15_0_6"/>
<dbReference type="InParanoid" id="P33997"/>
<dbReference type="OMA" id="IEQCNHI"/>
<dbReference type="OrthoDB" id="5986966at2"/>
<dbReference type="PhylomeDB" id="P33997"/>
<dbReference type="BioCyc" id="EcoCyc:PD02850"/>
<dbReference type="PRO" id="PR:P33997"/>
<dbReference type="Proteomes" id="UP000000625">
    <property type="component" value="Chromosome"/>
</dbReference>
<dbReference type="GO" id="GO:0003677">
    <property type="term" value="F:DNA binding"/>
    <property type="evidence" value="ECO:0007669"/>
    <property type="project" value="UniProtKB-KW"/>
</dbReference>
<dbReference type="GO" id="GO:0045893">
    <property type="term" value="P:positive regulation of DNA-templated transcription"/>
    <property type="evidence" value="ECO:0000315"/>
    <property type="project" value="EcoCyc"/>
</dbReference>
<dbReference type="GO" id="GO:0044010">
    <property type="term" value="P:single-species biofilm formation"/>
    <property type="evidence" value="ECO:0000316"/>
    <property type="project" value="EcoCyc"/>
</dbReference>
<dbReference type="FunFam" id="1.10.238.160:FF:000003">
    <property type="entry name" value="DNA-binding transcriptional activator AlpA"/>
    <property type="match status" value="1"/>
</dbReference>
<dbReference type="Gene3D" id="1.10.238.160">
    <property type="match status" value="1"/>
</dbReference>
<dbReference type="InterPro" id="IPR010260">
    <property type="entry name" value="AlpA"/>
</dbReference>
<dbReference type="InterPro" id="IPR052931">
    <property type="entry name" value="Prophage_regulatory_activator"/>
</dbReference>
<dbReference type="PANTHER" id="PTHR36154">
    <property type="entry name" value="DNA-BINDING TRANSCRIPTIONAL ACTIVATOR ALPA"/>
    <property type="match status" value="1"/>
</dbReference>
<dbReference type="PANTHER" id="PTHR36154:SF1">
    <property type="entry name" value="DNA-BINDING TRANSCRIPTIONAL ACTIVATOR ALPA"/>
    <property type="match status" value="1"/>
</dbReference>
<dbReference type="Pfam" id="PF05930">
    <property type="entry name" value="Phage_AlpA"/>
    <property type="match status" value="1"/>
</dbReference>
<organism>
    <name type="scientific">Escherichia coli (strain K12)</name>
    <dbReference type="NCBI Taxonomy" id="83333"/>
    <lineage>
        <taxon>Bacteria</taxon>
        <taxon>Pseudomonadati</taxon>
        <taxon>Pseudomonadota</taxon>
        <taxon>Gammaproteobacteria</taxon>
        <taxon>Enterobacterales</taxon>
        <taxon>Enterobacteriaceae</taxon>
        <taxon>Escherichia</taxon>
    </lineage>
</organism>
<name>ALPA_ECOLI</name>
<comment type="function">
    <text evidence="2 3">Positive regulator of the expression of the slpA gene (PubMed:7511582). When overexpressed, leads to suppression of the capsule overproduction and UV sensitivity phenotypes of cells mutant for the Lon ATP-dependent protease (PubMed:7511582). Part of the cryptic P4-like prophage CP4-57 (PubMed:7511583). Overexpression of AlpA leads to excision of the CP4-57 prophage by IntA. This inactivates ssrA (the gene upstream of the prophage) that encodes tmRNA which is required to rescue stalled ribosomes in a process known as trans-translation (PubMed:7511583).</text>
</comment>
<keyword id="KW-0010">Activator</keyword>
<keyword id="KW-0238">DNA-binding</keyword>
<keyword id="KW-1185">Reference proteome</keyword>
<keyword id="KW-0804">Transcription</keyword>
<keyword id="KW-0805">Transcription regulation</keyword>